<organism>
    <name type="scientific">Lactiplantibacillus plantarum (strain ATCC BAA-793 / NCIMB 8826 / WCFS1)</name>
    <name type="common">Lactobacillus plantarum</name>
    <dbReference type="NCBI Taxonomy" id="220668"/>
    <lineage>
        <taxon>Bacteria</taxon>
        <taxon>Bacillati</taxon>
        <taxon>Bacillota</taxon>
        <taxon>Bacilli</taxon>
        <taxon>Lactobacillales</taxon>
        <taxon>Lactobacillaceae</taxon>
        <taxon>Lactiplantibacillus</taxon>
    </lineage>
</organism>
<feature type="chain" id="PRO_0000129838" description="Small ribosomal subunit protein uS19">
    <location>
        <begin position="1"/>
        <end position="91"/>
    </location>
</feature>
<protein>
    <recommendedName>
        <fullName evidence="1">Small ribosomal subunit protein uS19</fullName>
    </recommendedName>
    <alternativeName>
        <fullName evidence="2">30S ribosomal protein S19</fullName>
    </alternativeName>
</protein>
<dbReference type="EMBL" id="AL935263">
    <property type="protein sequence ID" value="CCC78448.1"/>
    <property type="molecule type" value="Genomic_DNA"/>
</dbReference>
<dbReference type="RefSeq" id="WP_003638064.1">
    <property type="nucleotide sequence ID" value="NC_004567.2"/>
</dbReference>
<dbReference type="RefSeq" id="YP_004888962.1">
    <property type="nucleotide sequence ID" value="NC_004567.2"/>
</dbReference>
<dbReference type="SMR" id="Q88XY2"/>
<dbReference type="STRING" id="220668.lp_1038"/>
<dbReference type="EnsemblBacteria" id="CCC78448">
    <property type="protein sequence ID" value="CCC78448"/>
    <property type="gene ID" value="lp_1038"/>
</dbReference>
<dbReference type="GeneID" id="89668551"/>
<dbReference type="KEGG" id="lpl:lp_1038"/>
<dbReference type="PATRIC" id="fig|220668.9.peg.875"/>
<dbReference type="eggNOG" id="COG0185">
    <property type="taxonomic scope" value="Bacteria"/>
</dbReference>
<dbReference type="HOGENOM" id="CLU_144911_0_1_9"/>
<dbReference type="OrthoDB" id="9797833at2"/>
<dbReference type="PhylomeDB" id="Q88XY2"/>
<dbReference type="Proteomes" id="UP000000432">
    <property type="component" value="Chromosome"/>
</dbReference>
<dbReference type="GO" id="GO:0005737">
    <property type="term" value="C:cytoplasm"/>
    <property type="evidence" value="ECO:0007669"/>
    <property type="project" value="UniProtKB-ARBA"/>
</dbReference>
<dbReference type="GO" id="GO:0015935">
    <property type="term" value="C:small ribosomal subunit"/>
    <property type="evidence" value="ECO:0007669"/>
    <property type="project" value="InterPro"/>
</dbReference>
<dbReference type="GO" id="GO:0019843">
    <property type="term" value="F:rRNA binding"/>
    <property type="evidence" value="ECO:0007669"/>
    <property type="project" value="UniProtKB-UniRule"/>
</dbReference>
<dbReference type="GO" id="GO:0003735">
    <property type="term" value="F:structural constituent of ribosome"/>
    <property type="evidence" value="ECO:0007669"/>
    <property type="project" value="InterPro"/>
</dbReference>
<dbReference type="GO" id="GO:0000028">
    <property type="term" value="P:ribosomal small subunit assembly"/>
    <property type="evidence" value="ECO:0007669"/>
    <property type="project" value="TreeGrafter"/>
</dbReference>
<dbReference type="GO" id="GO:0006412">
    <property type="term" value="P:translation"/>
    <property type="evidence" value="ECO:0007669"/>
    <property type="project" value="UniProtKB-UniRule"/>
</dbReference>
<dbReference type="FunFam" id="3.30.860.10:FF:000001">
    <property type="entry name" value="30S ribosomal protein S19"/>
    <property type="match status" value="1"/>
</dbReference>
<dbReference type="Gene3D" id="3.30.860.10">
    <property type="entry name" value="30s Ribosomal Protein S19, Chain A"/>
    <property type="match status" value="1"/>
</dbReference>
<dbReference type="HAMAP" id="MF_00531">
    <property type="entry name" value="Ribosomal_uS19"/>
    <property type="match status" value="1"/>
</dbReference>
<dbReference type="InterPro" id="IPR002222">
    <property type="entry name" value="Ribosomal_uS19"/>
</dbReference>
<dbReference type="InterPro" id="IPR005732">
    <property type="entry name" value="Ribosomal_uS19_bac-type"/>
</dbReference>
<dbReference type="InterPro" id="IPR020934">
    <property type="entry name" value="Ribosomal_uS19_CS"/>
</dbReference>
<dbReference type="InterPro" id="IPR023575">
    <property type="entry name" value="Ribosomal_uS19_SF"/>
</dbReference>
<dbReference type="NCBIfam" id="TIGR01050">
    <property type="entry name" value="rpsS_bact"/>
    <property type="match status" value="1"/>
</dbReference>
<dbReference type="PANTHER" id="PTHR11880">
    <property type="entry name" value="RIBOSOMAL PROTEIN S19P FAMILY MEMBER"/>
    <property type="match status" value="1"/>
</dbReference>
<dbReference type="PANTHER" id="PTHR11880:SF8">
    <property type="entry name" value="SMALL RIBOSOMAL SUBUNIT PROTEIN US19M"/>
    <property type="match status" value="1"/>
</dbReference>
<dbReference type="Pfam" id="PF00203">
    <property type="entry name" value="Ribosomal_S19"/>
    <property type="match status" value="1"/>
</dbReference>
<dbReference type="PIRSF" id="PIRSF002144">
    <property type="entry name" value="Ribosomal_S19"/>
    <property type="match status" value="1"/>
</dbReference>
<dbReference type="PRINTS" id="PR00975">
    <property type="entry name" value="RIBOSOMALS19"/>
</dbReference>
<dbReference type="SUPFAM" id="SSF54570">
    <property type="entry name" value="Ribosomal protein S19"/>
    <property type="match status" value="1"/>
</dbReference>
<dbReference type="PROSITE" id="PS00323">
    <property type="entry name" value="RIBOSOMAL_S19"/>
    <property type="match status" value="1"/>
</dbReference>
<reference key="1">
    <citation type="journal article" date="2003" name="Proc. Natl. Acad. Sci. U.S.A.">
        <title>Complete genome sequence of Lactobacillus plantarum WCFS1.</title>
        <authorList>
            <person name="Kleerebezem M."/>
            <person name="Boekhorst J."/>
            <person name="van Kranenburg R."/>
            <person name="Molenaar D."/>
            <person name="Kuipers O.P."/>
            <person name="Leer R."/>
            <person name="Tarchini R."/>
            <person name="Peters S.A."/>
            <person name="Sandbrink H.M."/>
            <person name="Fiers M.W.E.J."/>
            <person name="Stiekema W."/>
            <person name="Klein Lankhorst R.M."/>
            <person name="Bron P.A."/>
            <person name="Hoffer S.M."/>
            <person name="Nierop Groot M.N."/>
            <person name="Kerkhoven R."/>
            <person name="De Vries M."/>
            <person name="Ursing B."/>
            <person name="De Vos W.M."/>
            <person name="Siezen R.J."/>
        </authorList>
    </citation>
    <scope>NUCLEOTIDE SEQUENCE [LARGE SCALE GENOMIC DNA]</scope>
    <source>
        <strain>ATCC BAA-793 / NCIMB 8826 / WCFS1</strain>
    </source>
</reference>
<reference key="2">
    <citation type="journal article" date="2012" name="J. Bacteriol.">
        <title>Complete resequencing and reannotation of the Lactobacillus plantarum WCFS1 genome.</title>
        <authorList>
            <person name="Siezen R.J."/>
            <person name="Francke C."/>
            <person name="Renckens B."/>
            <person name="Boekhorst J."/>
            <person name="Wels M."/>
            <person name="Kleerebezem M."/>
            <person name="van Hijum S.A."/>
        </authorList>
    </citation>
    <scope>NUCLEOTIDE SEQUENCE [LARGE SCALE GENOMIC DNA]</scope>
    <scope>GENOME REANNOTATION</scope>
    <source>
        <strain>ATCC BAA-793 / NCIMB 8826 / WCFS1</strain>
    </source>
</reference>
<keyword id="KW-1185">Reference proteome</keyword>
<keyword id="KW-0687">Ribonucleoprotein</keyword>
<keyword id="KW-0689">Ribosomal protein</keyword>
<keyword id="KW-0694">RNA-binding</keyword>
<keyword id="KW-0699">rRNA-binding</keyword>
<sequence length="91" mass="10291">MGRSLKKGPFADAHLLKKIDAQSDSDKKSVIKTWSRRSTIFPSFIGYTIAVYDGRKHVPVYIQDDMVGHKLGEFVPTRTFHGHGTDDKKTK</sequence>
<proteinExistence type="inferred from homology"/>
<name>RS19_LACPL</name>
<evidence type="ECO:0000255" key="1">
    <source>
        <dbReference type="HAMAP-Rule" id="MF_00531"/>
    </source>
</evidence>
<evidence type="ECO:0000305" key="2"/>
<comment type="function">
    <text evidence="1">Protein S19 forms a complex with S13 that binds strongly to the 16S ribosomal RNA.</text>
</comment>
<comment type="similarity">
    <text evidence="1">Belongs to the universal ribosomal protein uS19 family.</text>
</comment>
<accession>Q88XY2</accession>
<accession>F9UMK9</accession>
<gene>
    <name evidence="1" type="primary">rpsS</name>
    <name type="ordered locus">lp_1038</name>
</gene>